<organism>
    <name type="scientific">Shewanella oneidensis (strain ATCC 700550 / JCM 31522 / CIP 106686 / LMG 19005 / NCIMB 14063 / MR-1)</name>
    <dbReference type="NCBI Taxonomy" id="211586"/>
    <lineage>
        <taxon>Bacteria</taxon>
        <taxon>Pseudomonadati</taxon>
        <taxon>Pseudomonadota</taxon>
        <taxon>Gammaproteobacteria</taxon>
        <taxon>Alteromonadales</taxon>
        <taxon>Shewanellaceae</taxon>
        <taxon>Shewanella</taxon>
    </lineage>
</organism>
<proteinExistence type="inferred from homology"/>
<evidence type="ECO:0000255" key="1">
    <source>
        <dbReference type="HAMAP-Rule" id="MF_00015"/>
    </source>
</evidence>
<accession>Q8E8Q8</accession>
<sequence>MRPLTPRQAEILELIKRNIAETGMPPTRAEIATRLGFKSANAAEEHLKALAKKGCIEIMPGTSRGIRLPVEEEDNSETGLPLIGQVAAGEPILAQEHVEQYYQIDPSMFHPTANFLLRVKGDSMKNIGILEGDLLAVHKVQQARNGQVVVARVDDDVTVKRFEKKGNVVYLHAENEDYSPIKVDLSFQSLTIEGLAVGVIRNGDWL</sequence>
<name>LEXA_SHEON</name>
<feature type="chain" id="PRO_0000170084" description="LexA repressor">
    <location>
        <begin position="1"/>
        <end position="206"/>
    </location>
</feature>
<feature type="DNA-binding region" description="H-T-H motif" evidence="1">
    <location>
        <begin position="28"/>
        <end position="48"/>
    </location>
</feature>
<feature type="active site" description="For autocatalytic cleavage activity" evidence="1">
    <location>
        <position position="123"/>
    </location>
</feature>
<feature type="active site" description="For autocatalytic cleavage activity" evidence="1">
    <location>
        <position position="160"/>
    </location>
</feature>
<feature type="site" description="Cleavage; by autolysis" evidence="1">
    <location>
        <begin position="88"/>
        <end position="89"/>
    </location>
</feature>
<reference key="1">
    <citation type="journal article" date="2002" name="Nat. Biotechnol.">
        <title>Genome sequence of the dissimilatory metal ion-reducing bacterium Shewanella oneidensis.</title>
        <authorList>
            <person name="Heidelberg J.F."/>
            <person name="Paulsen I.T."/>
            <person name="Nelson K.E."/>
            <person name="Gaidos E.J."/>
            <person name="Nelson W.C."/>
            <person name="Read T.D."/>
            <person name="Eisen J.A."/>
            <person name="Seshadri R."/>
            <person name="Ward N.L."/>
            <person name="Methe B.A."/>
            <person name="Clayton R.A."/>
            <person name="Meyer T."/>
            <person name="Tsapin A."/>
            <person name="Scott J."/>
            <person name="Beanan M.J."/>
            <person name="Brinkac L.M."/>
            <person name="Daugherty S.C."/>
            <person name="DeBoy R.T."/>
            <person name="Dodson R.J."/>
            <person name="Durkin A.S."/>
            <person name="Haft D.H."/>
            <person name="Kolonay J.F."/>
            <person name="Madupu R."/>
            <person name="Peterson J.D."/>
            <person name="Umayam L.A."/>
            <person name="White O."/>
            <person name="Wolf A.M."/>
            <person name="Vamathevan J.J."/>
            <person name="Weidman J.F."/>
            <person name="Impraim M."/>
            <person name="Lee K."/>
            <person name="Berry K.J."/>
            <person name="Lee C."/>
            <person name="Mueller J."/>
            <person name="Khouri H.M."/>
            <person name="Gill J."/>
            <person name="Utterback T.R."/>
            <person name="McDonald L.A."/>
            <person name="Feldblyum T.V."/>
            <person name="Smith H.O."/>
            <person name="Venter J.C."/>
            <person name="Nealson K.H."/>
            <person name="Fraser C.M."/>
        </authorList>
    </citation>
    <scope>NUCLEOTIDE SEQUENCE [LARGE SCALE GENOMIC DNA]</scope>
    <source>
        <strain>ATCC 700550 / JCM 31522 / CIP 106686 / LMG 19005 / NCIMB 14063 / MR-1</strain>
    </source>
</reference>
<comment type="function">
    <text evidence="1">Represses a number of genes involved in the response to DNA damage (SOS response), including recA and lexA. In the presence of single-stranded DNA, RecA interacts with LexA causing an autocatalytic cleavage which disrupts the DNA-binding part of LexA, leading to derepression of the SOS regulon and eventually DNA repair.</text>
</comment>
<comment type="catalytic activity">
    <reaction evidence="1">
        <text>Hydrolysis of Ala-|-Gly bond in repressor LexA.</text>
        <dbReference type="EC" id="3.4.21.88"/>
    </reaction>
</comment>
<comment type="subunit">
    <text evidence="1">Homodimer.</text>
</comment>
<comment type="similarity">
    <text evidence="1">Belongs to the peptidase S24 family.</text>
</comment>
<protein>
    <recommendedName>
        <fullName evidence="1">LexA repressor</fullName>
        <ecNumber evidence="1">3.4.21.88</ecNumber>
    </recommendedName>
</protein>
<dbReference type="EC" id="3.4.21.88" evidence="1"/>
<dbReference type="EMBL" id="AE014299">
    <property type="protein sequence ID" value="AAN57563.1"/>
    <property type="molecule type" value="Genomic_DNA"/>
</dbReference>
<dbReference type="RefSeq" id="NP_720119.1">
    <property type="nucleotide sequence ID" value="NC_004347.2"/>
</dbReference>
<dbReference type="RefSeq" id="WP_011074200.1">
    <property type="nucleotide sequence ID" value="NZ_CP053946.1"/>
</dbReference>
<dbReference type="SMR" id="Q8E8Q8"/>
<dbReference type="STRING" id="211586.SO_4603"/>
<dbReference type="MEROPS" id="S24.001"/>
<dbReference type="PaxDb" id="211586-SO_4603"/>
<dbReference type="KEGG" id="son:SO_4603"/>
<dbReference type="PATRIC" id="fig|211586.12.peg.4461"/>
<dbReference type="eggNOG" id="COG1974">
    <property type="taxonomic scope" value="Bacteria"/>
</dbReference>
<dbReference type="HOGENOM" id="CLU_066192_45_3_6"/>
<dbReference type="OrthoDB" id="9802364at2"/>
<dbReference type="PhylomeDB" id="Q8E8Q8"/>
<dbReference type="BioCyc" id="SONE211586:G1GMP-4253-MONOMER"/>
<dbReference type="Proteomes" id="UP000008186">
    <property type="component" value="Chromosome"/>
</dbReference>
<dbReference type="GO" id="GO:0032993">
    <property type="term" value="C:protein-DNA complex"/>
    <property type="evidence" value="ECO:0000318"/>
    <property type="project" value="GO_Central"/>
</dbReference>
<dbReference type="GO" id="GO:0001217">
    <property type="term" value="F:DNA-binding transcription repressor activity"/>
    <property type="evidence" value="ECO:0000318"/>
    <property type="project" value="GO_Central"/>
</dbReference>
<dbReference type="GO" id="GO:0043565">
    <property type="term" value="F:sequence-specific DNA binding"/>
    <property type="evidence" value="ECO:0000318"/>
    <property type="project" value="GO_Central"/>
</dbReference>
<dbReference type="GO" id="GO:0004252">
    <property type="term" value="F:serine-type endopeptidase activity"/>
    <property type="evidence" value="ECO:0007669"/>
    <property type="project" value="UniProtKB-UniRule"/>
</dbReference>
<dbReference type="GO" id="GO:0006281">
    <property type="term" value="P:DNA repair"/>
    <property type="evidence" value="ECO:0007669"/>
    <property type="project" value="UniProtKB-UniRule"/>
</dbReference>
<dbReference type="GO" id="GO:0006260">
    <property type="term" value="P:DNA replication"/>
    <property type="evidence" value="ECO:0007669"/>
    <property type="project" value="UniProtKB-UniRule"/>
</dbReference>
<dbReference type="GO" id="GO:0045892">
    <property type="term" value="P:negative regulation of DNA-templated transcription"/>
    <property type="evidence" value="ECO:0000318"/>
    <property type="project" value="GO_Central"/>
</dbReference>
<dbReference type="GO" id="GO:0006508">
    <property type="term" value="P:proteolysis"/>
    <property type="evidence" value="ECO:0007669"/>
    <property type="project" value="InterPro"/>
</dbReference>
<dbReference type="GO" id="GO:0009432">
    <property type="term" value="P:SOS response"/>
    <property type="evidence" value="ECO:0000318"/>
    <property type="project" value="GO_Central"/>
</dbReference>
<dbReference type="CDD" id="cd06529">
    <property type="entry name" value="S24_LexA-like"/>
    <property type="match status" value="1"/>
</dbReference>
<dbReference type="FunFam" id="1.10.10.10:FF:000009">
    <property type="entry name" value="LexA repressor"/>
    <property type="match status" value="1"/>
</dbReference>
<dbReference type="FunFam" id="2.10.109.10:FF:000001">
    <property type="entry name" value="LexA repressor"/>
    <property type="match status" value="1"/>
</dbReference>
<dbReference type="Gene3D" id="2.10.109.10">
    <property type="entry name" value="Umud Fragment, subunit A"/>
    <property type="match status" value="1"/>
</dbReference>
<dbReference type="Gene3D" id="1.10.10.10">
    <property type="entry name" value="Winged helix-like DNA-binding domain superfamily/Winged helix DNA-binding domain"/>
    <property type="match status" value="1"/>
</dbReference>
<dbReference type="HAMAP" id="MF_00015">
    <property type="entry name" value="LexA"/>
    <property type="match status" value="1"/>
</dbReference>
<dbReference type="InterPro" id="IPR006200">
    <property type="entry name" value="LexA"/>
</dbReference>
<dbReference type="InterPro" id="IPR039418">
    <property type="entry name" value="LexA-like"/>
</dbReference>
<dbReference type="InterPro" id="IPR036286">
    <property type="entry name" value="LexA/Signal_pep-like_sf"/>
</dbReference>
<dbReference type="InterPro" id="IPR006199">
    <property type="entry name" value="LexA_DNA-bd_dom"/>
</dbReference>
<dbReference type="InterPro" id="IPR050077">
    <property type="entry name" value="LexA_repressor"/>
</dbReference>
<dbReference type="InterPro" id="IPR006197">
    <property type="entry name" value="Peptidase_S24_LexA"/>
</dbReference>
<dbReference type="InterPro" id="IPR015927">
    <property type="entry name" value="Peptidase_S24_S26A/B/C"/>
</dbReference>
<dbReference type="InterPro" id="IPR036388">
    <property type="entry name" value="WH-like_DNA-bd_sf"/>
</dbReference>
<dbReference type="InterPro" id="IPR036390">
    <property type="entry name" value="WH_DNA-bd_sf"/>
</dbReference>
<dbReference type="NCBIfam" id="TIGR00498">
    <property type="entry name" value="lexA"/>
    <property type="match status" value="1"/>
</dbReference>
<dbReference type="PANTHER" id="PTHR33516">
    <property type="entry name" value="LEXA REPRESSOR"/>
    <property type="match status" value="1"/>
</dbReference>
<dbReference type="PANTHER" id="PTHR33516:SF2">
    <property type="entry name" value="LEXA REPRESSOR-RELATED"/>
    <property type="match status" value="1"/>
</dbReference>
<dbReference type="Pfam" id="PF01726">
    <property type="entry name" value="LexA_DNA_bind"/>
    <property type="match status" value="1"/>
</dbReference>
<dbReference type="Pfam" id="PF00717">
    <property type="entry name" value="Peptidase_S24"/>
    <property type="match status" value="1"/>
</dbReference>
<dbReference type="PRINTS" id="PR00726">
    <property type="entry name" value="LEXASERPTASE"/>
</dbReference>
<dbReference type="SUPFAM" id="SSF51306">
    <property type="entry name" value="LexA/Signal peptidase"/>
    <property type="match status" value="1"/>
</dbReference>
<dbReference type="SUPFAM" id="SSF46785">
    <property type="entry name" value="Winged helix' DNA-binding domain"/>
    <property type="match status" value="1"/>
</dbReference>
<keyword id="KW-0068">Autocatalytic cleavage</keyword>
<keyword id="KW-0227">DNA damage</keyword>
<keyword id="KW-0234">DNA repair</keyword>
<keyword id="KW-0235">DNA replication</keyword>
<keyword id="KW-0238">DNA-binding</keyword>
<keyword id="KW-0378">Hydrolase</keyword>
<keyword id="KW-1185">Reference proteome</keyword>
<keyword id="KW-0678">Repressor</keyword>
<keyword id="KW-0742">SOS response</keyword>
<keyword id="KW-0804">Transcription</keyword>
<keyword id="KW-0805">Transcription regulation</keyword>
<gene>
    <name evidence="1" type="primary">lexA</name>
    <name type="ordered locus">SO_4603</name>
</gene>